<proteinExistence type="inferred from homology"/>
<keyword id="KW-0312">Gluconeogenesis</keyword>
<keyword id="KW-0324">Glycolysis</keyword>
<keyword id="KW-0413">Isomerase</keyword>
<dbReference type="EC" id="5.4.2.11" evidence="1"/>
<dbReference type="EMBL" id="CP000301">
    <property type="protein sequence ID" value="ABD85911.1"/>
    <property type="molecule type" value="Genomic_DNA"/>
</dbReference>
<dbReference type="SMR" id="Q21CH5"/>
<dbReference type="STRING" id="316056.RPC_0336"/>
<dbReference type="KEGG" id="rpc:RPC_0336"/>
<dbReference type="eggNOG" id="COG0588">
    <property type="taxonomic scope" value="Bacteria"/>
</dbReference>
<dbReference type="HOGENOM" id="CLU_033323_1_4_5"/>
<dbReference type="OrthoDB" id="9781415at2"/>
<dbReference type="UniPathway" id="UPA00109">
    <property type="reaction ID" value="UER00186"/>
</dbReference>
<dbReference type="GO" id="GO:0004619">
    <property type="term" value="F:phosphoglycerate mutase activity"/>
    <property type="evidence" value="ECO:0007669"/>
    <property type="project" value="UniProtKB-EC"/>
</dbReference>
<dbReference type="GO" id="GO:0006094">
    <property type="term" value="P:gluconeogenesis"/>
    <property type="evidence" value="ECO:0007669"/>
    <property type="project" value="UniProtKB-UniRule"/>
</dbReference>
<dbReference type="GO" id="GO:0006096">
    <property type="term" value="P:glycolytic process"/>
    <property type="evidence" value="ECO:0007669"/>
    <property type="project" value="UniProtKB-UniRule"/>
</dbReference>
<dbReference type="CDD" id="cd07067">
    <property type="entry name" value="HP_PGM_like"/>
    <property type="match status" value="1"/>
</dbReference>
<dbReference type="Gene3D" id="3.40.50.1240">
    <property type="entry name" value="Phosphoglycerate mutase-like"/>
    <property type="match status" value="1"/>
</dbReference>
<dbReference type="HAMAP" id="MF_01039">
    <property type="entry name" value="PGAM_GpmA"/>
    <property type="match status" value="1"/>
</dbReference>
<dbReference type="InterPro" id="IPR013078">
    <property type="entry name" value="His_Pase_superF_clade-1"/>
</dbReference>
<dbReference type="InterPro" id="IPR029033">
    <property type="entry name" value="His_PPase_superfam"/>
</dbReference>
<dbReference type="InterPro" id="IPR001345">
    <property type="entry name" value="PG/BPGM_mutase_AS"/>
</dbReference>
<dbReference type="InterPro" id="IPR005952">
    <property type="entry name" value="Phosphogly_mut1"/>
</dbReference>
<dbReference type="NCBIfam" id="TIGR01258">
    <property type="entry name" value="pgm_1"/>
    <property type="match status" value="1"/>
</dbReference>
<dbReference type="NCBIfam" id="NF002339">
    <property type="entry name" value="PRK01295.1"/>
    <property type="match status" value="1"/>
</dbReference>
<dbReference type="PANTHER" id="PTHR11931">
    <property type="entry name" value="PHOSPHOGLYCERATE MUTASE"/>
    <property type="match status" value="1"/>
</dbReference>
<dbReference type="Pfam" id="PF00300">
    <property type="entry name" value="His_Phos_1"/>
    <property type="match status" value="1"/>
</dbReference>
<dbReference type="SMART" id="SM00855">
    <property type="entry name" value="PGAM"/>
    <property type="match status" value="1"/>
</dbReference>
<dbReference type="SUPFAM" id="SSF53254">
    <property type="entry name" value="Phosphoglycerate mutase-like"/>
    <property type="match status" value="1"/>
</dbReference>
<dbReference type="PROSITE" id="PS00175">
    <property type="entry name" value="PG_MUTASE"/>
    <property type="match status" value="1"/>
</dbReference>
<accession>Q21CH5</accession>
<evidence type="ECO:0000255" key="1">
    <source>
        <dbReference type="HAMAP-Rule" id="MF_01039"/>
    </source>
</evidence>
<comment type="function">
    <text evidence="1">Catalyzes the interconversion of 2-phosphoglycerate and 3-phosphoglycerate.</text>
</comment>
<comment type="catalytic activity">
    <reaction evidence="1">
        <text>(2R)-2-phosphoglycerate = (2R)-3-phosphoglycerate</text>
        <dbReference type="Rhea" id="RHEA:15901"/>
        <dbReference type="ChEBI" id="CHEBI:58272"/>
        <dbReference type="ChEBI" id="CHEBI:58289"/>
        <dbReference type="EC" id="5.4.2.11"/>
    </reaction>
</comment>
<comment type="pathway">
    <text evidence="1">Carbohydrate degradation; glycolysis; pyruvate from D-glyceraldehyde 3-phosphate: step 3/5.</text>
</comment>
<comment type="subunit">
    <text evidence="1">Homodimer.</text>
</comment>
<comment type="similarity">
    <text evidence="1">Belongs to the phosphoglycerate mutase family. BPG-dependent PGAM subfamily.</text>
</comment>
<sequence length="207" mass="22878">MTDRLLVLVRHGQSEWNLKNLFTGWKDPGLTEKGVAEAIEAGKKLKAQGLVFDVAFTSVLTRAQTTLDLMLNELGQTGLPTSKNLALNERDYGDLSGLNKDDARKKWGEEQVHVWRRSYDVPPPGGESLKDTLARALPYYVQEILPCVLRGERTLVAAHGNSLRALIMVLEKLTPESILKRELGTGAPVIYRLNADSTVASKLDLAE</sequence>
<feature type="chain" id="PRO_1000064093" description="2,3-bisphosphoglycerate-dependent phosphoglycerate mutase">
    <location>
        <begin position="1"/>
        <end position="207"/>
    </location>
</feature>
<feature type="active site" description="Tele-phosphohistidine intermediate" evidence="1">
    <location>
        <position position="11"/>
    </location>
</feature>
<feature type="active site" description="Proton donor/acceptor" evidence="1">
    <location>
        <position position="89"/>
    </location>
</feature>
<feature type="binding site" evidence="1">
    <location>
        <begin position="10"/>
        <end position="17"/>
    </location>
    <ligand>
        <name>substrate</name>
    </ligand>
</feature>
<feature type="binding site" evidence="1">
    <location>
        <begin position="23"/>
        <end position="24"/>
    </location>
    <ligand>
        <name>substrate</name>
    </ligand>
</feature>
<feature type="binding site" evidence="1">
    <location>
        <position position="62"/>
    </location>
    <ligand>
        <name>substrate</name>
    </ligand>
</feature>
<feature type="binding site" evidence="1">
    <location>
        <begin position="89"/>
        <end position="92"/>
    </location>
    <ligand>
        <name>substrate</name>
    </ligand>
</feature>
<feature type="binding site" evidence="1">
    <location>
        <position position="100"/>
    </location>
    <ligand>
        <name>substrate</name>
    </ligand>
</feature>
<feature type="binding site" evidence="1">
    <location>
        <begin position="116"/>
        <end position="117"/>
    </location>
    <ligand>
        <name>substrate</name>
    </ligand>
</feature>
<feature type="binding site" evidence="1">
    <location>
        <begin position="160"/>
        <end position="161"/>
    </location>
    <ligand>
        <name>substrate</name>
    </ligand>
</feature>
<feature type="site" description="Transition state stabilizer" evidence="1">
    <location>
        <position position="159"/>
    </location>
</feature>
<protein>
    <recommendedName>
        <fullName evidence="1">2,3-bisphosphoglycerate-dependent phosphoglycerate mutase</fullName>
        <shortName evidence="1">BPG-dependent PGAM</shortName>
        <shortName evidence="1">PGAM</shortName>
        <shortName evidence="1">Phosphoglyceromutase</shortName>
        <shortName evidence="1">dPGM</shortName>
        <ecNumber evidence="1">5.4.2.11</ecNumber>
    </recommendedName>
</protein>
<reference key="1">
    <citation type="submission" date="2006-03" db="EMBL/GenBank/DDBJ databases">
        <title>Complete sequence of Rhodopseudomonas palustris BisB18.</title>
        <authorList>
            <consortium name="US DOE Joint Genome Institute"/>
            <person name="Copeland A."/>
            <person name="Lucas S."/>
            <person name="Lapidus A."/>
            <person name="Barry K."/>
            <person name="Detter J.C."/>
            <person name="Glavina del Rio T."/>
            <person name="Hammon N."/>
            <person name="Israni S."/>
            <person name="Dalin E."/>
            <person name="Tice H."/>
            <person name="Pitluck S."/>
            <person name="Chain P."/>
            <person name="Malfatti S."/>
            <person name="Shin M."/>
            <person name="Vergez L."/>
            <person name="Schmutz J."/>
            <person name="Larimer F."/>
            <person name="Land M."/>
            <person name="Hauser L."/>
            <person name="Pelletier D.A."/>
            <person name="Kyrpides N."/>
            <person name="Anderson I."/>
            <person name="Oda Y."/>
            <person name="Harwood C.S."/>
            <person name="Richardson P."/>
        </authorList>
    </citation>
    <scope>NUCLEOTIDE SEQUENCE [LARGE SCALE GENOMIC DNA]</scope>
    <source>
        <strain>BisB18</strain>
    </source>
</reference>
<organism>
    <name type="scientific">Rhodopseudomonas palustris (strain BisB18)</name>
    <dbReference type="NCBI Taxonomy" id="316056"/>
    <lineage>
        <taxon>Bacteria</taxon>
        <taxon>Pseudomonadati</taxon>
        <taxon>Pseudomonadota</taxon>
        <taxon>Alphaproteobacteria</taxon>
        <taxon>Hyphomicrobiales</taxon>
        <taxon>Nitrobacteraceae</taxon>
        <taxon>Rhodopseudomonas</taxon>
    </lineage>
</organism>
<name>GPMA_RHOPB</name>
<gene>
    <name evidence="1" type="primary">gpmA</name>
    <name type="ordered locus">RPC_0336</name>
</gene>